<proteinExistence type="evidence at protein level"/>
<dbReference type="EMBL" id="U18650">
    <property type="protein sequence ID" value="AAA90987.1"/>
    <property type="status" value="ALT_SEQ"/>
    <property type="molecule type" value="mRNA"/>
</dbReference>
<dbReference type="EMBL" id="U01022">
    <property type="protein sequence ID" value="AAC52133.1"/>
    <property type="molecule type" value="mRNA"/>
</dbReference>
<dbReference type="PIR" id="S40522">
    <property type="entry name" value="S40522"/>
</dbReference>
<dbReference type="SMR" id="P51111"/>
<dbReference type="CORUM" id="P51111"/>
<dbReference type="FunCoup" id="P51111">
    <property type="interactions" value="3397"/>
</dbReference>
<dbReference type="IntAct" id="P51111">
    <property type="interactions" value="1"/>
</dbReference>
<dbReference type="STRING" id="10116.ENSRNOP00000054971"/>
<dbReference type="ChEMBL" id="CHEMBL2439943"/>
<dbReference type="GlyGen" id="P51111">
    <property type="glycosylation" value="3 sites"/>
</dbReference>
<dbReference type="iPTMnet" id="P51111"/>
<dbReference type="PhosphoSitePlus" id="P51111"/>
<dbReference type="jPOST" id="P51111"/>
<dbReference type="PaxDb" id="10116-ENSRNOP00000054971"/>
<dbReference type="PeptideAtlas" id="P51111"/>
<dbReference type="AGR" id="RGD:68337"/>
<dbReference type="RGD" id="68337">
    <property type="gene designation" value="Htt"/>
</dbReference>
<dbReference type="eggNOG" id="ENOG502QR1D">
    <property type="taxonomic scope" value="Eukaryota"/>
</dbReference>
<dbReference type="InParanoid" id="P51111"/>
<dbReference type="OrthoDB" id="6515172at2759"/>
<dbReference type="PhylomeDB" id="P51111"/>
<dbReference type="PRO" id="PR:P51111"/>
<dbReference type="Proteomes" id="UP000002494">
    <property type="component" value="Unplaced"/>
</dbReference>
<dbReference type="GO" id="GO:0005776">
    <property type="term" value="C:autophagosome"/>
    <property type="evidence" value="ECO:0000266"/>
    <property type="project" value="RGD"/>
</dbReference>
<dbReference type="GO" id="GO:0030424">
    <property type="term" value="C:axon"/>
    <property type="evidence" value="ECO:0000314"/>
    <property type="project" value="RGD"/>
</dbReference>
<dbReference type="GO" id="GO:0005814">
    <property type="term" value="C:centriole"/>
    <property type="evidence" value="ECO:0000266"/>
    <property type="project" value="RGD"/>
</dbReference>
<dbReference type="GO" id="GO:0030136">
    <property type="term" value="C:clathrin-coated vesicle"/>
    <property type="evidence" value="ECO:0000314"/>
    <property type="project" value="RGD"/>
</dbReference>
<dbReference type="GO" id="GO:0005737">
    <property type="term" value="C:cytoplasm"/>
    <property type="evidence" value="ECO:0000266"/>
    <property type="project" value="RGD"/>
</dbReference>
<dbReference type="GO" id="GO:0031410">
    <property type="term" value="C:cytoplasmic vesicle"/>
    <property type="evidence" value="ECO:0000266"/>
    <property type="project" value="RGD"/>
</dbReference>
<dbReference type="GO" id="GO:0030659">
    <property type="term" value="C:cytoplasmic vesicle membrane"/>
    <property type="evidence" value="ECO:0000266"/>
    <property type="project" value="RGD"/>
</dbReference>
<dbReference type="GO" id="GO:0030425">
    <property type="term" value="C:dendrite"/>
    <property type="evidence" value="ECO:0000314"/>
    <property type="project" value="RGD"/>
</dbReference>
<dbReference type="GO" id="GO:0005769">
    <property type="term" value="C:early endosome"/>
    <property type="evidence" value="ECO:0000266"/>
    <property type="project" value="RGD"/>
</dbReference>
<dbReference type="GO" id="GO:0005783">
    <property type="term" value="C:endoplasmic reticulum"/>
    <property type="evidence" value="ECO:0000250"/>
    <property type="project" value="UniProtKB"/>
</dbReference>
<dbReference type="GO" id="GO:0098978">
    <property type="term" value="C:glutamatergic synapse"/>
    <property type="evidence" value="ECO:0000266"/>
    <property type="project" value="RGD"/>
</dbReference>
<dbReference type="GO" id="GO:0005794">
    <property type="term" value="C:Golgi apparatus"/>
    <property type="evidence" value="ECO:0000266"/>
    <property type="project" value="RGD"/>
</dbReference>
<dbReference type="GO" id="GO:0016234">
    <property type="term" value="C:inclusion body"/>
    <property type="evidence" value="ECO:0000266"/>
    <property type="project" value="RGD"/>
</dbReference>
<dbReference type="GO" id="GO:0005770">
    <property type="term" value="C:late endosome"/>
    <property type="evidence" value="ECO:0000266"/>
    <property type="project" value="RGD"/>
</dbReference>
<dbReference type="GO" id="GO:0043025">
    <property type="term" value="C:neuronal cell body"/>
    <property type="evidence" value="ECO:0000314"/>
    <property type="project" value="RGD"/>
</dbReference>
<dbReference type="GO" id="GO:0071598">
    <property type="term" value="C:neuronal ribonucleoprotein granule"/>
    <property type="evidence" value="ECO:0000314"/>
    <property type="project" value="RGD"/>
</dbReference>
<dbReference type="GO" id="GO:0005634">
    <property type="term" value="C:nucleus"/>
    <property type="evidence" value="ECO:0000266"/>
    <property type="project" value="RGD"/>
</dbReference>
<dbReference type="GO" id="GO:0048471">
    <property type="term" value="C:perinuclear region of cytoplasm"/>
    <property type="evidence" value="ECO:0000250"/>
    <property type="project" value="UniProtKB"/>
</dbReference>
<dbReference type="GO" id="GO:0099524">
    <property type="term" value="C:postsynaptic cytosol"/>
    <property type="evidence" value="ECO:0000266"/>
    <property type="project" value="RGD"/>
</dbReference>
<dbReference type="GO" id="GO:0099523">
    <property type="term" value="C:presynaptic cytosol"/>
    <property type="evidence" value="ECO:0000266"/>
    <property type="project" value="RGD"/>
</dbReference>
<dbReference type="GO" id="GO:0032991">
    <property type="term" value="C:protein-containing complex"/>
    <property type="evidence" value="ECO:0000266"/>
    <property type="project" value="RGD"/>
</dbReference>
<dbReference type="GO" id="GO:0097060">
    <property type="term" value="C:synaptic membrane"/>
    <property type="evidence" value="ECO:0000314"/>
    <property type="project" value="ParkinsonsUK-UCL"/>
</dbReference>
<dbReference type="GO" id="GO:0048487">
    <property type="term" value="F:beta-tubulin binding"/>
    <property type="evidence" value="ECO:0000266"/>
    <property type="project" value="RGD"/>
</dbReference>
<dbReference type="GO" id="GO:0050809">
    <property type="term" value="F:diazepam binding"/>
    <property type="evidence" value="ECO:0000266"/>
    <property type="project" value="RGD"/>
</dbReference>
<dbReference type="GO" id="GO:0034452">
    <property type="term" value="F:dynactin binding"/>
    <property type="evidence" value="ECO:0000266"/>
    <property type="project" value="RGD"/>
</dbReference>
<dbReference type="GO" id="GO:0045505">
    <property type="term" value="F:dynein intermediate chain binding"/>
    <property type="evidence" value="ECO:0000266"/>
    <property type="project" value="RGD"/>
</dbReference>
<dbReference type="GO" id="GO:0031072">
    <property type="term" value="F:heat shock protein binding"/>
    <property type="evidence" value="ECO:0000266"/>
    <property type="project" value="RGD"/>
</dbReference>
<dbReference type="GO" id="GO:0042802">
    <property type="term" value="F:identical protein binding"/>
    <property type="evidence" value="ECO:0000266"/>
    <property type="project" value="RGD"/>
</dbReference>
<dbReference type="GO" id="GO:0019900">
    <property type="term" value="F:kinase binding"/>
    <property type="evidence" value="ECO:0000266"/>
    <property type="project" value="RGD"/>
</dbReference>
<dbReference type="GO" id="GO:0002039">
    <property type="term" value="F:p53 binding"/>
    <property type="evidence" value="ECO:0000266"/>
    <property type="project" value="RGD"/>
</dbReference>
<dbReference type="GO" id="GO:0004721">
    <property type="term" value="F:phosphoprotein phosphatase activity"/>
    <property type="evidence" value="ECO:0000266"/>
    <property type="project" value="RGD"/>
</dbReference>
<dbReference type="GO" id="GO:0005522">
    <property type="term" value="F:profilin binding"/>
    <property type="evidence" value="ECO:0000266"/>
    <property type="project" value="RGD"/>
</dbReference>
<dbReference type="GO" id="GO:0005102">
    <property type="term" value="F:signaling receptor binding"/>
    <property type="evidence" value="ECO:0000353"/>
    <property type="project" value="RGD"/>
</dbReference>
<dbReference type="GO" id="GO:0044325">
    <property type="term" value="F:transmembrane transporter binding"/>
    <property type="evidence" value="ECO:0000266"/>
    <property type="project" value="RGD"/>
</dbReference>
<dbReference type="GO" id="GO:0009653">
    <property type="term" value="P:anatomical structure morphogenesis"/>
    <property type="evidence" value="ECO:0000266"/>
    <property type="project" value="RGD"/>
</dbReference>
<dbReference type="GO" id="GO:0009952">
    <property type="term" value="P:anterior/posterior pattern specification"/>
    <property type="evidence" value="ECO:0000266"/>
    <property type="project" value="RGD"/>
</dbReference>
<dbReference type="GO" id="GO:0008306">
    <property type="term" value="P:associative learning"/>
    <property type="evidence" value="ECO:0000266"/>
    <property type="project" value="RGD"/>
</dbReference>
<dbReference type="GO" id="GO:0008088">
    <property type="term" value="P:axo-dendritic transport"/>
    <property type="evidence" value="ECO:0000266"/>
    <property type="project" value="RGD"/>
</dbReference>
<dbReference type="GO" id="GO:0007420">
    <property type="term" value="P:brain development"/>
    <property type="evidence" value="ECO:0000266"/>
    <property type="project" value="RGD"/>
</dbReference>
<dbReference type="GO" id="GO:0090398">
    <property type="term" value="P:cellular senescence"/>
    <property type="evidence" value="ECO:0000266"/>
    <property type="project" value="RGD"/>
</dbReference>
<dbReference type="GO" id="GO:0007417">
    <property type="term" value="P:central nervous system development"/>
    <property type="evidence" value="ECO:0000266"/>
    <property type="project" value="RGD"/>
</dbReference>
<dbReference type="GO" id="GO:0000052">
    <property type="term" value="P:citrulline metabolic process"/>
    <property type="evidence" value="ECO:0000266"/>
    <property type="project" value="RGD"/>
</dbReference>
<dbReference type="GO" id="GO:0008340">
    <property type="term" value="P:determination of adult lifespan"/>
    <property type="evidence" value="ECO:0000266"/>
    <property type="project" value="RGD"/>
</dbReference>
<dbReference type="GO" id="GO:0007029">
    <property type="term" value="P:endoplasmic reticulum organization"/>
    <property type="evidence" value="ECO:0000266"/>
    <property type="project" value="RGD"/>
</dbReference>
<dbReference type="GO" id="GO:0006888">
    <property type="term" value="P:endoplasmic reticulum to Golgi vesicle-mediated transport"/>
    <property type="evidence" value="ECO:0000266"/>
    <property type="project" value="RGD"/>
</dbReference>
<dbReference type="GO" id="GO:0016197">
    <property type="term" value="P:endosomal transport"/>
    <property type="evidence" value="ECO:0000266"/>
    <property type="project" value="RGD"/>
</dbReference>
<dbReference type="GO" id="GO:0000132">
    <property type="term" value="P:establishment of mitotic spindle orientation"/>
    <property type="evidence" value="ECO:0000266"/>
    <property type="project" value="RGD"/>
</dbReference>
<dbReference type="GO" id="GO:0007212">
    <property type="term" value="P:G protein-coupled dopamine receptor signaling pathway"/>
    <property type="evidence" value="ECO:0000266"/>
    <property type="project" value="RGD"/>
</dbReference>
<dbReference type="GO" id="GO:0007369">
    <property type="term" value="P:gastrulation"/>
    <property type="evidence" value="ECO:0000266"/>
    <property type="project" value="RGD"/>
</dbReference>
<dbReference type="GO" id="GO:0010467">
    <property type="term" value="P:gene expression"/>
    <property type="evidence" value="ECO:0000266"/>
    <property type="project" value="RGD"/>
</dbReference>
<dbReference type="GO" id="GO:0007030">
    <property type="term" value="P:Golgi organization"/>
    <property type="evidence" value="ECO:0000266"/>
    <property type="project" value="RGD"/>
</dbReference>
<dbReference type="GO" id="GO:0007625">
    <property type="term" value="P:grooming behavior"/>
    <property type="evidence" value="ECO:0000266"/>
    <property type="project" value="RGD"/>
</dbReference>
<dbReference type="GO" id="GO:0042445">
    <property type="term" value="P:hormone metabolic process"/>
    <property type="evidence" value="ECO:0000266"/>
    <property type="project" value="RGD"/>
</dbReference>
<dbReference type="GO" id="GO:0030073">
    <property type="term" value="P:insulin secretion"/>
    <property type="evidence" value="ECO:0000266"/>
    <property type="project" value="RGD"/>
</dbReference>
<dbReference type="GO" id="GO:0019244">
    <property type="term" value="P:lactate biosynthetic process from pyruvate"/>
    <property type="evidence" value="ECO:0000266"/>
    <property type="project" value="RGD"/>
</dbReference>
<dbReference type="GO" id="GO:0007612">
    <property type="term" value="P:learning"/>
    <property type="evidence" value="ECO:0000266"/>
    <property type="project" value="RGD"/>
</dbReference>
<dbReference type="GO" id="GO:0007611">
    <property type="term" value="P:learning or memory"/>
    <property type="evidence" value="ECO:0000266"/>
    <property type="project" value="RGD"/>
</dbReference>
<dbReference type="GO" id="GO:0007626">
    <property type="term" value="P:locomotory behavior"/>
    <property type="evidence" value="ECO:0000266"/>
    <property type="project" value="RGD"/>
</dbReference>
<dbReference type="GO" id="GO:0007019">
    <property type="term" value="P:microtubule depolymerization"/>
    <property type="evidence" value="ECO:0000315"/>
    <property type="project" value="RGD"/>
</dbReference>
<dbReference type="GO" id="GO:0099111">
    <property type="term" value="P:microtubule-based transport"/>
    <property type="evidence" value="ECO:0000318"/>
    <property type="project" value="GO_Central"/>
</dbReference>
<dbReference type="GO" id="GO:0006839">
    <property type="term" value="P:mitochondrial transport"/>
    <property type="evidence" value="ECO:0000266"/>
    <property type="project" value="RGD"/>
</dbReference>
<dbReference type="GO" id="GO:0007005">
    <property type="term" value="P:mitochondrion organization"/>
    <property type="evidence" value="ECO:0000266"/>
    <property type="project" value="RGD"/>
</dbReference>
<dbReference type="GO" id="GO:0051028">
    <property type="term" value="P:mRNA transport"/>
    <property type="evidence" value="ECO:0000315"/>
    <property type="project" value="RGD"/>
</dbReference>
<dbReference type="GO" id="GO:0060586">
    <property type="term" value="P:multicellular organismal-level iron ion homeostasis"/>
    <property type="evidence" value="ECO:0000266"/>
    <property type="project" value="RGD"/>
</dbReference>
<dbReference type="GO" id="GO:0043066">
    <property type="term" value="P:negative regulation of apoptotic process"/>
    <property type="evidence" value="ECO:0000266"/>
    <property type="project" value="RGD"/>
</dbReference>
<dbReference type="GO" id="GO:2001237">
    <property type="term" value="P:negative regulation of extrinsic apoptotic signaling pathway"/>
    <property type="evidence" value="ECO:0000315"/>
    <property type="project" value="RGD"/>
</dbReference>
<dbReference type="GO" id="GO:0021990">
    <property type="term" value="P:neural plate formation"/>
    <property type="evidence" value="ECO:0000266"/>
    <property type="project" value="RGD"/>
</dbReference>
<dbReference type="GO" id="GO:0022008">
    <property type="term" value="P:neurogenesis"/>
    <property type="evidence" value="ECO:0000266"/>
    <property type="project" value="RGD"/>
</dbReference>
<dbReference type="GO" id="GO:0048666">
    <property type="term" value="P:neuron development"/>
    <property type="evidence" value="ECO:0000266"/>
    <property type="project" value="RGD"/>
</dbReference>
<dbReference type="GO" id="GO:0021988">
    <property type="term" value="P:olfactory lobe development"/>
    <property type="evidence" value="ECO:0000266"/>
    <property type="project" value="RGD"/>
</dbReference>
<dbReference type="GO" id="GO:0048341">
    <property type="term" value="P:paraxial mesoderm formation"/>
    <property type="evidence" value="ECO:0000266"/>
    <property type="project" value="RGD"/>
</dbReference>
<dbReference type="GO" id="GO:0030072">
    <property type="term" value="P:peptide hormone secretion"/>
    <property type="evidence" value="ECO:0000266"/>
    <property type="project" value="RGD"/>
</dbReference>
<dbReference type="GO" id="GO:1905337">
    <property type="term" value="P:positive regulation of aggrephagy"/>
    <property type="evidence" value="ECO:0000266"/>
    <property type="project" value="RGD"/>
</dbReference>
<dbReference type="GO" id="GO:0043065">
    <property type="term" value="P:positive regulation of apoptotic process"/>
    <property type="evidence" value="ECO:0000266"/>
    <property type="project" value="RGD"/>
</dbReference>
<dbReference type="GO" id="GO:1905291">
    <property type="term" value="P:positive regulation of CAMKK-AMPK signaling cascade"/>
    <property type="evidence" value="ECO:0000266"/>
    <property type="project" value="RGD"/>
</dbReference>
<dbReference type="GO" id="GO:0045724">
    <property type="term" value="P:positive regulation of cilium assembly"/>
    <property type="evidence" value="ECO:0000266"/>
    <property type="project" value="RGD"/>
</dbReference>
<dbReference type="GO" id="GO:1904504">
    <property type="term" value="P:positive regulation of lipophagy"/>
    <property type="evidence" value="ECO:0000266"/>
    <property type="project" value="RGD"/>
</dbReference>
<dbReference type="GO" id="GO:1901526">
    <property type="term" value="P:positive regulation of mitophagy"/>
    <property type="evidence" value="ECO:0000266"/>
    <property type="project" value="RGD"/>
</dbReference>
<dbReference type="GO" id="GO:1905505">
    <property type="term" value="P:positive regulation of motile cilium assembly"/>
    <property type="evidence" value="ECO:0000266"/>
    <property type="project" value="RGD"/>
</dbReference>
<dbReference type="GO" id="GO:1902857">
    <property type="term" value="P:positive regulation of non-motile cilium assembly"/>
    <property type="evidence" value="ECO:0000266"/>
    <property type="project" value="RGD"/>
</dbReference>
<dbReference type="GO" id="GO:0099527">
    <property type="term" value="P:postsynapse to nucleus signaling pathway"/>
    <property type="evidence" value="ECO:0000266"/>
    <property type="project" value="RGD"/>
</dbReference>
<dbReference type="GO" id="GO:0031648">
    <property type="term" value="P:protein destabilization"/>
    <property type="evidence" value="ECO:0000266"/>
    <property type="project" value="RGD"/>
</dbReference>
<dbReference type="GO" id="GO:0071539">
    <property type="term" value="P:protein localization to centrosome"/>
    <property type="evidence" value="ECO:0000266"/>
    <property type="project" value="RGD"/>
</dbReference>
<dbReference type="GO" id="GO:0034504">
    <property type="term" value="P:protein localization to nucleus"/>
    <property type="evidence" value="ECO:0000266"/>
    <property type="project" value="RGD"/>
</dbReference>
<dbReference type="GO" id="GO:0019805">
    <property type="term" value="P:quinolinate biosynthetic process"/>
    <property type="evidence" value="ECO:0000266"/>
    <property type="project" value="RGD"/>
</dbReference>
<dbReference type="GO" id="GO:1905289">
    <property type="term" value="P:regulation of CAMKK-AMPK signaling cascade"/>
    <property type="evidence" value="ECO:0000266"/>
    <property type="project" value="RGD"/>
</dbReference>
<dbReference type="GO" id="GO:0010468">
    <property type="term" value="P:regulation of gene expression"/>
    <property type="evidence" value="ECO:0000266"/>
    <property type="project" value="RGD"/>
</dbReference>
<dbReference type="GO" id="GO:1904580">
    <property type="term" value="P:regulation of intracellular mRNA localization"/>
    <property type="evidence" value="ECO:0000315"/>
    <property type="project" value="RGD"/>
</dbReference>
<dbReference type="GO" id="GO:0043523">
    <property type="term" value="P:regulation of neuron apoptotic process"/>
    <property type="evidence" value="ECO:0000266"/>
    <property type="project" value="RGD"/>
</dbReference>
<dbReference type="GO" id="GO:1900180">
    <property type="term" value="P:regulation of protein localization to nucleus"/>
    <property type="evidence" value="ECO:0000266"/>
    <property type="project" value="RGD"/>
</dbReference>
<dbReference type="GO" id="GO:0048167">
    <property type="term" value="P:regulation of synaptic plasticity"/>
    <property type="evidence" value="ECO:0000266"/>
    <property type="project" value="RGD"/>
</dbReference>
<dbReference type="GO" id="GO:0051592">
    <property type="term" value="P:response to calcium ion"/>
    <property type="evidence" value="ECO:0000266"/>
    <property type="project" value="RGD"/>
</dbReference>
<dbReference type="GO" id="GO:0006890">
    <property type="term" value="P:retrograde vesicle-mediated transport, Golgi to endoplasmic reticulum"/>
    <property type="evidence" value="ECO:0000266"/>
    <property type="project" value="RGD"/>
</dbReference>
<dbReference type="GO" id="GO:0035176">
    <property type="term" value="P:social behavior"/>
    <property type="evidence" value="ECO:0000266"/>
    <property type="project" value="RGD"/>
</dbReference>
<dbReference type="GO" id="GO:0007283">
    <property type="term" value="P:spermatogenesis"/>
    <property type="evidence" value="ECO:0000266"/>
    <property type="project" value="RGD"/>
</dbReference>
<dbReference type="GO" id="GO:0021756">
    <property type="term" value="P:striatum development"/>
    <property type="evidence" value="ECO:0000266"/>
    <property type="project" value="RGD"/>
</dbReference>
<dbReference type="GO" id="GO:0000050">
    <property type="term" value="P:urea cycle"/>
    <property type="evidence" value="ECO:0000266"/>
    <property type="project" value="RGD"/>
</dbReference>
<dbReference type="GO" id="GO:0047496">
    <property type="term" value="P:vesicle transport along microtubule"/>
    <property type="evidence" value="ECO:0000266"/>
    <property type="project" value="RGD"/>
</dbReference>
<dbReference type="GO" id="GO:0008542">
    <property type="term" value="P:visual learning"/>
    <property type="evidence" value="ECO:0000266"/>
    <property type="project" value="RGD"/>
</dbReference>
<dbReference type="GO" id="GO:0042297">
    <property type="term" value="P:vocal learning"/>
    <property type="evidence" value="ECO:0000266"/>
    <property type="project" value="RGD"/>
</dbReference>
<dbReference type="FunFam" id="1.25.10.10:FF:000273">
    <property type="entry name" value="Huntingtin"/>
    <property type="match status" value="1"/>
</dbReference>
<dbReference type="FunFam" id="1.25.10.10:FF:000388">
    <property type="entry name" value="Huntingtin"/>
    <property type="match status" value="1"/>
</dbReference>
<dbReference type="Gene3D" id="1.25.10.10">
    <property type="entry name" value="Leucine-rich Repeat Variant"/>
    <property type="match status" value="2"/>
</dbReference>
<dbReference type="InterPro" id="IPR011989">
    <property type="entry name" value="ARM-like"/>
</dbReference>
<dbReference type="InterPro" id="IPR016024">
    <property type="entry name" value="ARM-type_fold"/>
</dbReference>
<dbReference type="InterPro" id="IPR048412">
    <property type="entry name" value="Htt_bridge"/>
</dbReference>
<dbReference type="InterPro" id="IPR048413">
    <property type="entry name" value="Htt_C-HEAT_rpt"/>
</dbReference>
<dbReference type="InterPro" id="IPR048411">
    <property type="entry name" value="Htt_N_HEAT_rpt-1"/>
</dbReference>
<dbReference type="InterPro" id="IPR000091">
    <property type="entry name" value="Huntingtin"/>
</dbReference>
<dbReference type="InterPro" id="IPR028426">
    <property type="entry name" value="Huntingtin_fam"/>
</dbReference>
<dbReference type="InterPro" id="IPR024613">
    <property type="entry name" value="Huntingtin_N_HEAT_rpt-2"/>
</dbReference>
<dbReference type="PANTHER" id="PTHR10170:SF10">
    <property type="entry name" value="HUNTINGTIN"/>
    <property type="match status" value="1"/>
</dbReference>
<dbReference type="PANTHER" id="PTHR10170">
    <property type="entry name" value="HUNTINGTON DISEASE PROTEIN"/>
    <property type="match status" value="1"/>
</dbReference>
<dbReference type="Pfam" id="PF20925">
    <property type="entry name" value="Htt_bridge"/>
    <property type="match status" value="1"/>
</dbReference>
<dbReference type="Pfam" id="PF20927">
    <property type="entry name" value="Htt_C-HEAT"/>
    <property type="match status" value="1"/>
</dbReference>
<dbReference type="Pfam" id="PF12372">
    <property type="entry name" value="Htt_N-HEAT"/>
    <property type="match status" value="1"/>
</dbReference>
<dbReference type="Pfam" id="PF20926">
    <property type="entry name" value="Htt_N-HEAT_1"/>
    <property type="match status" value="1"/>
</dbReference>
<dbReference type="PRINTS" id="PR00375">
    <property type="entry name" value="HUNTINGTIN"/>
</dbReference>
<dbReference type="SUPFAM" id="SSF48371">
    <property type="entry name" value="ARM repeat"/>
    <property type="match status" value="2"/>
</dbReference>
<dbReference type="SUPFAM" id="SSF81995">
    <property type="entry name" value="beta-sandwich domain of Sec23/24"/>
    <property type="match status" value="1"/>
</dbReference>
<protein>
    <recommendedName>
        <fullName>Huntingtin</fullName>
    </recommendedName>
    <alternativeName>
        <fullName>Huntington disease protein homolog</fullName>
        <shortName>HD protein homolog</shortName>
    </alternativeName>
    <component>
        <recommendedName>
            <fullName evidence="2">Huntingtin, myristoylated N-terminal fragment</fullName>
        </recommendedName>
    </component>
</protein>
<name>HD_RAT</name>
<feature type="chain" id="PRO_0000083944" description="Huntingtin">
    <location>
        <begin position="1"/>
        <end position="3110"/>
    </location>
</feature>
<feature type="chain" id="PRO_0000447488" description="Huntingtin, myristoylated N-terminal fragment" evidence="2">
    <location>
        <begin position="522"/>
        <end position="555"/>
    </location>
</feature>
<feature type="repeat" description="HEAT 1">
    <location>
        <begin position="174"/>
        <end position="211"/>
    </location>
</feature>
<feature type="repeat" description="HEAT 2">
    <location>
        <begin position="216"/>
        <end position="253"/>
    </location>
</feature>
<feature type="repeat" description="HEAT 3">
    <location>
        <begin position="773"/>
        <end position="810"/>
    </location>
</feature>
<feature type="repeat" description="HEAT 4">
    <location>
        <begin position="873"/>
        <end position="911"/>
    </location>
</feature>
<feature type="repeat" description="HEAT 5">
    <location>
        <begin position="1395"/>
        <end position="1432"/>
    </location>
</feature>
<feature type="region of interest" description="Disordered" evidence="5">
    <location>
        <begin position="1"/>
        <end position="58"/>
    </location>
</feature>
<feature type="region of interest" description="Interaction with ZDHHC17" evidence="2">
    <location>
        <begin position="462"/>
        <end position="473"/>
    </location>
</feature>
<feature type="region of interest" description="Disordered" evidence="5">
    <location>
        <begin position="487"/>
        <end position="549"/>
    </location>
</feature>
<feature type="region of interest" description="Disordered" evidence="5">
    <location>
        <begin position="1137"/>
        <end position="1195"/>
    </location>
</feature>
<feature type="region of interest" description="Disordered" evidence="5">
    <location>
        <begin position="2601"/>
        <end position="2628"/>
    </location>
</feature>
<feature type="short sequence motif" description="Nuclear export signal" evidence="1">
    <location>
        <begin position="2363"/>
        <end position="2372"/>
    </location>
</feature>
<feature type="compositionally biased region" description="Pro residues" evidence="5">
    <location>
        <begin position="18"/>
        <end position="52"/>
    </location>
</feature>
<feature type="compositionally biased region" description="Polar residues" evidence="5">
    <location>
        <begin position="521"/>
        <end position="549"/>
    </location>
</feature>
<feature type="compositionally biased region" description="Low complexity" evidence="5">
    <location>
        <begin position="1140"/>
        <end position="1151"/>
    </location>
</feature>
<feature type="compositionally biased region" description="Polar residues" evidence="5">
    <location>
        <begin position="1178"/>
        <end position="1195"/>
    </location>
</feature>
<feature type="compositionally biased region" description="Acidic residues" evidence="5">
    <location>
        <begin position="2602"/>
        <end position="2613"/>
    </location>
</feature>
<feature type="site" description="Cleavage; by caspase-3" evidence="2">
    <location>
        <begin position="482"/>
        <end position="483"/>
    </location>
</feature>
<feature type="site" description="Cleavage; by caspase-3" evidence="4">
    <location>
        <begin position="499"/>
        <end position="500"/>
    </location>
</feature>
<feature type="site" description="Cleavage; by caspase-3" evidence="2">
    <location>
        <begin position="521"/>
        <end position="522"/>
    </location>
</feature>
<feature type="site" description="Cleavage; by caspase-6" evidence="2">
    <location>
        <begin position="555"/>
        <end position="556"/>
    </location>
</feature>
<feature type="modified residue" description="N6-acetyllysine" evidence="2">
    <location>
        <position position="2"/>
    </location>
</feature>
<feature type="modified residue" description="N6-acetyllysine" evidence="2">
    <location>
        <position position="146"/>
    </location>
</feature>
<feature type="modified residue" description="N6-acetyllysine" evidence="2">
    <location>
        <position position="204"/>
    </location>
</feature>
<feature type="modified residue" description="N6-acetyllysine" evidence="2">
    <location>
        <position position="313"/>
    </location>
</feature>
<feature type="modified residue" description="Phosphoserine" evidence="3">
    <location>
        <position position="387"/>
    </location>
</feature>
<feature type="modified residue" description="Phosphoserine" evidence="3">
    <location>
        <position position="389"/>
    </location>
</feature>
<feature type="modified residue" description="Phosphoserine" evidence="8">
    <location>
        <position position="402"/>
    </location>
</feature>
<feature type="modified residue" description="N6-acetyllysine" evidence="2">
    <location>
        <position position="412"/>
    </location>
</feature>
<feature type="modified residue" description="Phosphoserine" evidence="2">
    <location>
        <position position="611"/>
    </location>
</feature>
<feature type="modified residue" description="Phosphoserine" evidence="2">
    <location>
        <position position="614"/>
    </location>
</feature>
<feature type="modified residue" description="Phosphoserine; by CDK5" evidence="2">
    <location>
        <position position="1150"/>
    </location>
</feature>
<feature type="modified residue" description="Phosphoserine; by CDK5" evidence="2">
    <location>
        <position position="1170"/>
    </location>
</feature>
<feature type="modified residue" description="Phosphoserine" evidence="2">
    <location>
        <position position="1845"/>
    </location>
</feature>
<feature type="lipid moiety-binding region" description="N-myristoyl glycine" evidence="2">
    <location>
        <position position="522"/>
    </location>
</feature>
<organism>
    <name type="scientific">Rattus norvegicus</name>
    <name type="common">Rat</name>
    <dbReference type="NCBI Taxonomy" id="10116"/>
    <lineage>
        <taxon>Eukaryota</taxon>
        <taxon>Metazoa</taxon>
        <taxon>Chordata</taxon>
        <taxon>Craniata</taxon>
        <taxon>Vertebrata</taxon>
        <taxon>Euteleostomi</taxon>
        <taxon>Mammalia</taxon>
        <taxon>Eutheria</taxon>
        <taxon>Euarchontoglires</taxon>
        <taxon>Glires</taxon>
        <taxon>Rodentia</taxon>
        <taxon>Myomorpha</taxon>
        <taxon>Muroidea</taxon>
        <taxon>Muridae</taxon>
        <taxon>Murinae</taxon>
        <taxon>Rattus</taxon>
    </lineage>
</organism>
<accession>P51111</accession>
<evidence type="ECO:0000250" key="1"/>
<evidence type="ECO:0000250" key="2">
    <source>
        <dbReference type="UniProtKB" id="P42858"/>
    </source>
</evidence>
<evidence type="ECO:0000250" key="3">
    <source>
        <dbReference type="UniProtKB" id="P42859"/>
    </source>
</evidence>
<evidence type="ECO:0000255" key="4"/>
<evidence type="ECO:0000256" key="5">
    <source>
        <dbReference type="SAM" id="MobiDB-lite"/>
    </source>
</evidence>
<evidence type="ECO:0000305" key="6"/>
<evidence type="ECO:0000305" key="7">
    <source>
    </source>
</evidence>
<evidence type="ECO:0007744" key="8">
    <source>
    </source>
</evidence>
<keyword id="KW-0007">Acetylation</keyword>
<keyword id="KW-0963">Cytoplasm</keyword>
<keyword id="KW-0968">Cytoplasmic vesicle</keyword>
<keyword id="KW-0903">Direct protein sequencing</keyword>
<keyword id="KW-0449">Lipoprotein</keyword>
<keyword id="KW-0519">Myristate</keyword>
<keyword id="KW-0539">Nucleus</keyword>
<keyword id="KW-0597">Phosphoprotein</keyword>
<keyword id="KW-1185">Reference proteome</keyword>
<keyword id="KW-0677">Repeat</keyword>
<gene>
    <name type="primary">Htt</name>
    <name type="synonym">Hd</name>
    <name type="synonym">Hdh</name>
</gene>
<comment type="function">
    <molecule>Huntingtin</molecule>
    <text evidence="2">May play a role in microtubule-mediated transport or vesicle function.</text>
</comment>
<comment type="function">
    <molecule>Huntingtin, myristoylated N-terminal fragment</molecule>
    <text evidence="2">Promotes the formation of autophagic vesicles.</text>
</comment>
<comment type="subunit">
    <text evidence="2 3">Interacts with PFN1. Interacts through its N-terminus with PRPF40A. Interacts with PQBP1. Interacts with SETD2. Interacts with SH3GLB1. Interacts with SYVN. Interacts with TPR; the interaction is inhibited by forms of Huntingtin with expanded polyglutamine stretch. Interacts with ZDHHC13 (via ANK repeats). Interacts with ZDHHC17 (via ANK repeats). Interacts with F8A1/F8A2/F8A3 (By similarity). Found in a complex with F8A1/F8A2/F8A3, HTT and RAB5A; mediates the recruitment of HTT by RAB5A (By similarity).</text>
</comment>
<comment type="interaction">
    <interactant intactId="EBI-9674649">
        <id>P51111</id>
    </interactant>
    <interactant intactId="EBI-8614640">
        <id>P29994</id>
        <label>Itpr1</label>
    </interactant>
    <organismsDiffer>false</organismsDiffer>
    <experiments>4</experiments>
</comment>
<comment type="subcellular location">
    <molecule>Huntingtin</molecule>
    <subcellularLocation>
        <location evidence="2">Cytoplasm</location>
    </subcellularLocation>
    <subcellularLocation>
        <location evidence="2">Nucleus</location>
    </subcellularLocation>
    <text evidence="2">Shuttles between cytoplasm and nucleus in a Ran GTPase-independent manner.</text>
</comment>
<comment type="subcellular location">
    <molecule>Huntingtin, myristoylated N-terminal fragment</molecule>
    <subcellularLocation>
        <location evidence="2">Cytoplasmic vesicle</location>
        <location evidence="2">Autophagosome</location>
    </subcellularLocation>
</comment>
<comment type="tissue specificity">
    <text>Expressed to a high degree in all the regions of the brain of adults and in meiotic cells of the testis. In addition, very low levels are detected in various non-neuronal tissues (heart, muscle, liver, lung and kidney).</text>
</comment>
<comment type="developmental stage">
    <text>Identified at high levels in neuronal tissues of embryos as early as day 14.5. This expression remains constant in all further development stages (up to the adult). On the other hand the expression in non-neuronal tissues is down-regulated from stage 17.5 day old embryos.</text>
</comment>
<comment type="domain">
    <text evidence="2">The N-terminal Gln-rich and Pro-rich domain has great conformational flexibility and is likely to exist in a fluctuating equilibrium of alpha-helical, random coil, and extended conformations.</text>
</comment>
<comment type="PTM">
    <text evidence="2">Phosphorylation at Ser-1150 and Ser-1170 by CDK5 in response to DNA damage in nuclei of neurons protects neurons against polyglutamine expansion as well as DNA damage mediated toxicity.</text>
</comment>
<comment type="PTM">
    <molecule>Huntingtin</molecule>
    <text evidence="2">Cleaved by caspases downstream of the polyglutamine stretch.</text>
</comment>
<comment type="PTM">
    <molecule>Huntingtin, myristoylated N-terminal fragment</molecule>
    <text evidence="2">Myristoylated at Gly-522, following proteolytic cleavage at Asp-521.</text>
</comment>
<comment type="polymorphism">
    <text evidence="7">The poly-Gln region does not appear to be polymorphic, explaining the absence of a rodent HD-like disorder.</text>
</comment>
<comment type="similarity">
    <text evidence="6">Belongs to the huntingtin family.</text>
</comment>
<reference key="1">
    <citation type="journal article" date="1995" name="Hum. Mol. Genet.">
        <title>Expression of the Huntington disease gene in rodents: cloning the rat homologue and evidence for downregulation in non-neuronal tissues during development.</title>
        <authorList>
            <person name="Schmitt I."/>
            <person name="Baechner D."/>
            <person name="Megow D."/>
            <person name="Henklein P."/>
            <person name="Boulter J."/>
            <person name="Hameister H."/>
            <person name="Epplen J.T."/>
            <person name="Riess O."/>
        </authorList>
    </citation>
    <scope>NUCLEOTIDE SEQUENCE [MRNA]</scope>
    <source>
        <tissue>Brain</tissue>
    </source>
</reference>
<reference key="2">
    <citation type="submission" date="2007-09" db="UniProtKB">
        <authorList>
            <person name="Lubec G."/>
            <person name="Kang S.U."/>
            <person name="Lubec S."/>
        </authorList>
    </citation>
    <scope>PROTEIN SEQUENCE OF 356-384; 429-441; 767-795; 1760-1772; 1832-1838 AND 2875-2898</scope>
    <scope>IDENTIFICATION BY MASS SPECTROMETRY</scope>
    <source>
        <strain>Sprague-Dawley</strain>
        <tissue>Brain</tissue>
    </source>
</reference>
<reference key="3">
    <citation type="journal article" date="1993" name="Nat. Genet.">
        <title>Widespread expression of the human and rat Huntington's disease gene in brain and nonneural tissues.</title>
        <authorList>
            <person name="Strong T.V."/>
            <person name="Tagle D.A."/>
            <person name="Valdes J.M."/>
            <person name="Elmer L.W."/>
            <person name="Boehm K."/>
            <person name="Swaroop M."/>
            <person name="Kaatz K.W."/>
            <person name="Collins F.S."/>
            <person name="Albin R.L."/>
        </authorList>
    </citation>
    <scope>NUCLEOTIDE SEQUENCE [MRNA] OF 1773-1926</scope>
    <source>
        <tissue>Brain</tissue>
    </source>
</reference>
<reference key="4">
    <citation type="journal article" date="2012" name="Nat. Commun.">
        <title>Quantitative maps of protein phosphorylation sites across 14 different rat organs and tissues.</title>
        <authorList>
            <person name="Lundby A."/>
            <person name="Secher A."/>
            <person name="Lage K."/>
            <person name="Nordsborg N.B."/>
            <person name="Dmytriyev A."/>
            <person name="Lundby C."/>
            <person name="Olsen J.V."/>
        </authorList>
    </citation>
    <scope>PHOSPHORYLATION [LARGE SCALE ANALYSIS] AT SER-402</scope>
    <scope>IDENTIFICATION BY MASS SPECTROMETRY [LARGE SCALE ANALYSIS]</scope>
</reference>
<sequence length="3110" mass="343762">MKAFESLKSFQQQQQQQQPPPQPPPPPPPPPQPPQPPPQGQPPPPPPLPGPAEEPLHRPKKELSATKKDRVNHCLTICENIVAQSLRNSPEFQKLLGIAMELFLLCSDDASRRRMVADECLNKVIKALMDSNLPRLQLELYKEIKKNGAPRSLRAALWRFAELAHLVRPQKCRPYLVNLLPCLTRTSKRPEESVQETLAAAVPKIMASFGNFANDNEIKVLLKAFIANLKSSSPTVRRTAAGSAVSICQHSRRTQYFYNWLLNVLLGLLVPMEEDHPTLLILGVLLTLRCLVPLLQQQVKDTSLKGSFGVTRKEMEVSPSAEQLVQVYELTLHHTQHQDHNVVTGALELLQQLFRTPPPELLQALTTPGGLGQLTLVREEAGGRGRSGSIVELLAGGGSSCSPVLSRKQKGKVLLGEEEALEDDSESRSDVSSSAFAASVKSEIGGELAASSSGVSTPGSVGHDIITEQPRSQHTLQADSVDLSGCDLTSAATDGDEEDILSHSSSQFSAVPSDPAMDLNDGTQASSPISDSSQTTTEGPDSAVTPSDSSEIVLDGADSQYLGVQIGQPQEEDREAAGVLSGEVSDVFRNSSLALQQAHLLERMGHSRQPSDSSVDKFVSKDEVAEAGDPESKPCRIKGDIGQPNDDDSAPLVHCVRLLSASFLLTGEKKALVPDRDVRVSVKALALSCIGAAVALHPESFFSKLYKVPLSTMESTEEQYVSDILNYIDHGDPQVRGATAILCGTLVYSILSRSRLRVGDWLGTIRALTGNTFSLVDCIPLLQKTLKDESSVTCKLACTAVRHCVLSLCSSSYSDLGLQLLIDMLPLKNSSYWLVRTELLETLAEIDFRLVSFLEAKAESLHRGPHHYTGFLKLQERVLNNVVIYLLGDEDPRVRHVAATTLTRLVPKLFYKCDQGQADPVEAVARDQSSVYLKLLMHETQPPSHFSVSTITRIYRGYSLLPSVTDVTMENNLSRVVAAVSHELITSTTRALTFGCCEALCVLSAAFPVCTWSLGWHCGVPPLSASDESRKSCTVGMASMILTLLSSAWFPLDLSAIQDALILAGNLLAASAPKSLRSSWASEEEGSSAATRQEEIWPALGDRTLVPMVEQLFSHLLKVINICAHVLDDETPGPAIKAALPSLTNPPSLSPIRRKGKEKEPGEQTSTPMSPKKGGEASTASRQSDTSGPVTASKSSSLGSFYHLPSYLRLHDVLKATHANYKVTLDLQNSTEKFGGFLRSALDVLSQILELATLQDIGKCVEEVLGYLKSCFSREPMMATVCVQQLLKTLFGTNLASQFDGLSSNPSKSQCRAQRLGSSSVRPGLYHYCFMAPYTHFTQALADASLRNMVQADQEHDASGWFDVLQKVSAQLKTNLTSVTKNRADKNAIHNHIRLFEPLVIKALKQYTTTTSVQLQKQVLDLLAQLVQLRVNYCLLDSDQVFIGFVLKQFEYIEVGQFRESEAIIPNIFFFLVLLSYERYHSKQIIGIPKIIQLCDGIMASGRKAVTHAIPALQPIVHDLFVLRGTNKADAGKELETQKEVVVSMLLRLIQYHQVLEMFILVLQQCHKENEDKWKRLSRQVADIILPMLAKQQMHIDSHEALGVLNTLFEILAPSSLRPVDMLLRSMFITPSTMASVSTVQLWISGILAILRVLISQSTEDIVLSRIQELSFSPYLISCPVINRLRDGDSNPTLGERSRGKQVKNLPEDTFSRFLLQLVGILLEDIVTKQLKVDMSEQQHTFYCQELGTLLMCLIHIFKSGMFRRITAAATRLFTSDGCEGSFYTLDSLNARVRAMVPTHPALVLLWCQILLLINHTDHRWWAEVQQTPKRHSLSCTKSLNPQISAEEDSGSAAQLGMCNREIVRRGALILFCDYVCQNLHDSEHLTWLIVNHIQDLISLSHEPPVQDFISAIHRNSAASGLFIQAIQSRCENLSTPTTLKKTLQCLEGIHLSQSGAVLTLYVDRLLGTPFRALARMVDTLACRRVEMLLAANLQSSMAQLPEEELNRIQEHLQNTGLAQRHQRLYSLLDRFRLSTVQDSLSPLPPVTSHPLDGDGHTSLETVNPDKDWYLQLVRSQCWTRSDSALLEGAELVNRIPAEDMSDFMMSSEFNLSLFAPCLSLGMSEIAGSQKSPLFEAARRVTLDRVTNVVQQLPAVHQVFQPFLPTEPTAYWSKLNDLFGDTTSYQSLTTLARALAQYLVVLSKVPAPLHLPPEKEGHTVKFVVMTLEALSWHLIHEQIPLSLDLQAGLDCCCLALQVPGLWGVLSSPEYVTHTCSLIHCVRFILEAIAVQPGDQLLGPESRSHTPRAVRKEEVDSDIQNLSHITSACEMVADMVESLQSVLALGHKRNSTLPSFLTAVLKNIVVSLARLPLVNSYTRVPPLVWKLGWSPKPGGDFGTVFPEIPVEFLQEKEVLKEFIYRINTLGWTSRTQFEETWATLLGVLVTQPLVMEQEESPPEEDTERTQIHVLAVQAITSLVLSAMAVPVAGNPAVSCLEQQPRNKPLKALDTRFGRKLSMIRGIVEQEIQEMVSQRENTATHHSHQAWDPVPSLLPATTGALISHDKLLLQINSEREPGNMSYKLGQVSIHSVWLGNNITPLREEEWDEEEEEEADAPAPTSPPVSPVNSRKHRAGVDIHSCSQFLLELYSRWILPSSAARRTPVILISEVVRSLLVVSDLFTDVPQFEMMYLTLTELRRVHPSEDEILIQYLVPATCKAAAVLGMDKTVAEPVSRLLESTLRSTHLPSQIGALHGILYVLECDLLDDTVKQLIPVVSDYLLSNLKGIAHCVNIHSQQHVLVMCATAFYLMENYPLDVGPEFSASVIQMCGVMLSGSEESTPSVIYHCALRGLERLLLSEQLSRLDTESLVKLSVDRVNVQSPHRAMAALGLMLTCMYTGKEKASPGRASDPSPATPDSESVIVAMERVSVLFDRIRKGFPCEARVVARILPQFLDDFFPPQDVMNKVIGEFLSNQQPYPQFMATVVYKVFQTLHSAGQSSMVRDWVMLSLSNFTQRTPVAMAMWSLSCFLVSASTSPWVSAILPHVISRMGKLEQVDVNLFCLVATDFYRHQIEEEFDRRAFQSVFEVVAAPGSPYHRLLACLQNVHKVTAC</sequence>